<evidence type="ECO:0000250" key="1">
    <source>
        <dbReference type="UniProtKB" id="E9PV24"/>
    </source>
</evidence>
<evidence type="ECO:0000250" key="2">
    <source>
        <dbReference type="UniProtKB" id="P02671"/>
    </source>
</evidence>
<evidence type="ECO:0000255" key="3"/>
<evidence type="ECO:0000255" key="4">
    <source>
        <dbReference type="PROSITE-ProRule" id="PRU00739"/>
    </source>
</evidence>
<evidence type="ECO:0000256" key="5">
    <source>
        <dbReference type="SAM" id="MobiDB-lite"/>
    </source>
</evidence>
<evidence type="ECO:0000269" key="6">
    <source ref="3"/>
</evidence>
<evidence type="ECO:0000303" key="7">
    <source>
    </source>
</evidence>
<evidence type="ECO:0000305" key="8"/>
<evidence type="ECO:0007744" key="9">
    <source>
    </source>
</evidence>
<accession>P06399</accession>
<dbReference type="EMBL" id="X86561">
    <property type="protein sequence ID" value="CAA60264.1"/>
    <property type="molecule type" value="Genomic_DNA"/>
</dbReference>
<dbReference type="EMBL" id="X86561">
    <property type="protein sequence ID" value="CAA60263.1"/>
    <property type="molecule type" value="Genomic_DNA"/>
</dbReference>
<dbReference type="EMBL" id="M35601">
    <property type="protein sequence ID" value="AAA41158.1"/>
    <property type="molecule type" value="mRNA"/>
</dbReference>
<dbReference type="PIR" id="I53408">
    <property type="entry name" value="I53408"/>
</dbReference>
<dbReference type="SMR" id="P06399"/>
<dbReference type="FunCoup" id="P06399">
    <property type="interactions" value="140"/>
</dbReference>
<dbReference type="STRING" id="10116.ENSRNOP00000060007"/>
<dbReference type="GlyCosmos" id="P06399">
    <property type="glycosylation" value="1 site, No reported glycans"/>
</dbReference>
<dbReference type="GlyGen" id="P06399">
    <property type="glycosylation" value="2 sites, 1 O-linked glycan (1 site)"/>
</dbReference>
<dbReference type="iPTMnet" id="P06399"/>
<dbReference type="PhosphoSitePlus" id="P06399"/>
<dbReference type="PaxDb" id="10116-ENSRNOP00000060007"/>
<dbReference type="PeptideAtlas" id="P06399"/>
<dbReference type="UCSC" id="RGD:2603">
    <molecule id="P06399-1"/>
    <property type="organism name" value="rat"/>
</dbReference>
<dbReference type="AGR" id="RGD:2603"/>
<dbReference type="RGD" id="2603">
    <property type="gene designation" value="Fga"/>
</dbReference>
<dbReference type="eggNOG" id="KOG2579">
    <property type="taxonomic scope" value="Eukaryota"/>
</dbReference>
<dbReference type="InParanoid" id="P06399"/>
<dbReference type="PhylomeDB" id="P06399"/>
<dbReference type="Reactome" id="R-RNO-114608">
    <property type="pathway name" value="Platelet degranulation"/>
</dbReference>
<dbReference type="Reactome" id="R-RNO-140875">
    <property type="pathway name" value="Common Pathway of Fibrin Clot Formation"/>
</dbReference>
<dbReference type="Reactome" id="R-RNO-216083">
    <property type="pathway name" value="Integrin cell surface interactions"/>
</dbReference>
<dbReference type="Reactome" id="R-RNO-354192">
    <property type="pathway name" value="Integrin signaling"/>
</dbReference>
<dbReference type="Reactome" id="R-RNO-354194">
    <property type="pathway name" value="GRB2:SOS provides linkage to MAPK signaling for Integrins"/>
</dbReference>
<dbReference type="Reactome" id="R-RNO-372708">
    <property type="pathway name" value="p130Cas linkage to MAPK signaling for integrins"/>
</dbReference>
<dbReference type="Reactome" id="R-RNO-381426">
    <property type="pathway name" value="Regulation of Insulin-like Growth Factor (IGF) transport and uptake by Insulin-like Growth Factor Binding Proteins (IGFBPs)"/>
</dbReference>
<dbReference type="Reactome" id="R-RNO-5674135">
    <property type="pathway name" value="MAP2K and MAPK activation"/>
</dbReference>
<dbReference type="Reactome" id="R-RNO-5686938">
    <property type="pathway name" value="Regulation of TLR by endogenous ligand"/>
</dbReference>
<dbReference type="Reactome" id="R-RNO-8957275">
    <property type="pathway name" value="Post-translational protein phosphorylation"/>
</dbReference>
<dbReference type="PRO" id="PR:P06399"/>
<dbReference type="Proteomes" id="UP000002494">
    <property type="component" value="Unplaced"/>
</dbReference>
<dbReference type="GO" id="GO:0072562">
    <property type="term" value="C:blood microparticle"/>
    <property type="evidence" value="ECO:0000314"/>
    <property type="project" value="RGD"/>
</dbReference>
<dbReference type="GO" id="GO:0005938">
    <property type="term" value="C:cell cortex"/>
    <property type="evidence" value="ECO:0000266"/>
    <property type="project" value="RGD"/>
</dbReference>
<dbReference type="GO" id="GO:0009986">
    <property type="term" value="C:cell surface"/>
    <property type="evidence" value="ECO:0000266"/>
    <property type="project" value="RGD"/>
</dbReference>
<dbReference type="GO" id="GO:0009897">
    <property type="term" value="C:external side of plasma membrane"/>
    <property type="evidence" value="ECO:0000266"/>
    <property type="project" value="RGD"/>
</dbReference>
<dbReference type="GO" id="GO:0005615">
    <property type="term" value="C:extracellular space"/>
    <property type="evidence" value="ECO:0000314"/>
    <property type="project" value="RGD"/>
</dbReference>
<dbReference type="GO" id="GO:0005577">
    <property type="term" value="C:fibrinogen complex"/>
    <property type="evidence" value="ECO:0000266"/>
    <property type="project" value="RGD"/>
</dbReference>
<dbReference type="GO" id="GO:0031091">
    <property type="term" value="C:platelet alpha granule"/>
    <property type="evidence" value="ECO:0000266"/>
    <property type="project" value="RGD"/>
</dbReference>
<dbReference type="GO" id="GO:0045202">
    <property type="term" value="C:synapse"/>
    <property type="evidence" value="ECO:0000266"/>
    <property type="project" value="RGD"/>
</dbReference>
<dbReference type="GO" id="GO:0046872">
    <property type="term" value="F:metal ion binding"/>
    <property type="evidence" value="ECO:0007669"/>
    <property type="project" value="UniProtKB-KW"/>
</dbReference>
<dbReference type="GO" id="GO:0030674">
    <property type="term" value="F:protein-macromolecule adaptor activity"/>
    <property type="evidence" value="ECO:0000318"/>
    <property type="project" value="GO_Central"/>
</dbReference>
<dbReference type="GO" id="GO:0005102">
    <property type="term" value="F:signaling receptor binding"/>
    <property type="evidence" value="ECO:0007669"/>
    <property type="project" value="InterPro"/>
</dbReference>
<dbReference type="GO" id="GO:0005198">
    <property type="term" value="F:structural molecule activity"/>
    <property type="evidence" value="ECO:0000266"/>
    <property type="project" value="RGD"/>
</dbReference>
<dbReference type="GO" id="GO:0006953">
    <property type="term" value="P:acute-phase response"/>
    <property type="evidence" value="ECO:0000270"/>
    <property type="project" value="RGD"/>
</dbReference>
<dbReference type="GO" id="GO:0002250">
    <property type="term" value="P:adaptive immune response"/>
    <property type="evidence" value="ECO:0007669"/>
    <property type="project" value="UniProtKB-KW"/>
</dbReference>
<dbReference type="GO" id="GO:0007596">
    <property type="term" value="P:blood coagulation"/>
    <property type="evidence" value="ECO:0000266"/>
    <property type="project" value="RGD"/>
</dbReference>
<dbReference type="GO" id="GO:0072377">
    <property type="term" value="P:blood coagulation, common pathway"/>
    <property type="evidence" value="ECO:0000266"/>
    <property type="project" value="RGD"/>
</dbReference>
<dbReference type="GO" id="GO:0072378">
    <property type="term" value="P:blood coagulation, fibrin clot formation"/>
    <property type="evidence" value="ECO:0000266"/>
    <property type="project" value="RGD"/>
</dbReference>
<dbReference type="GO" id="GO:0007160">
    <property type="term" value="P:cell-matrix adhesion"/>
    <property type="evidence" value="ECO:0000266"/>
    <property type="project" value="RGD"/>
</dbReference>
<dbReference type="GO" id="GO:1990643">
    <property type="term" value="P:cellular response to granulocyte colony-stimulating factor"/>
    <property type="evidence" value="ECO:0000270"/>
    <property type="project" value="RGD"/>
</dbReference>
<dbReference type="GO" id="GO:0071354">
    <property type="term" value="P:cellular response to interleukin-6"/>
    <property type="evidence" value="ECO:0000270"/>
    <property type="project" value="RGD"/>
</dbReference>
<dbReference type="GO" id="GO:1904628">
    <property type="term" value="P:cellular response to phorbol 13-acetate 12-myristate"/>
    <property type="evidence" value="ECO:0000270"/>
    <property type="project" value="RGD"/>
</dbReference>
<dbReference type="GO" id="GO:0042730">
    <property type="term" value="P:fibrinolysis"/>
    <property type="evidence" value="ECO:0000266"/>
    <property type="project" value="RGD"/>
</dbReference>
<dbReference type="GO" id="GO:0043152">
    <property type="term" value="P:induction of bacterial agglutination"/>
    <property type="evidence" value="ECO:0000266"/>
    <property type="project" value="RGD"/>
</dbReference>
<dbReference type="GO" id="GO:0045087">
    <property type="term" value="P:innate immune response"/>
    <property type="evidence" value="ECO:0007669"/>
    <property type="project" value="UniProtKB-KW"/>
</dbReference>
<dbReference type="GO" id="GO:0097421">
    <property type="term" value="P:liver regeneration"/>
    <property type="evidence" value="ECO:0000270"/>
    <property type="project" value="RGD"/>
</dbReference>
<dbReference type="GO" id="GO:2000352">
    <property type="term" value="P:negative regulation of endothelial cell apoptotic process"/>
    <property type="evidence" value="ECO:0000266"/>
    <property type="project" value="RGD"/>
</dbReference>
<dbReference type="GO" id="GO:1902042">
    <property type="term" value="P:negative regulation of extrinsic apoptotic signaling pathway via death domain receptors"/>
    <property type="evidence" value="ECO:0000266"/>
    <property type="project" value="RGD"/>
</dbReference>
<dbReference type="GO" id="GO:0031639">
    <property type="term" value="P:plasminogen activation"/>
    <property type="evidence" value="ECO:0000266"/>
    <property type="project" value="RGD"/>
</dbReference>
<dbReference type="GO" id="GO:0070527">
    <property type="term" value="P:platelet aggregation"/>
    <property type="evidence" value="ECO:0000266"/>
    <property type="project" value="RGD"/>
</dbReference>
<dbReference type="GO" id="GO:0070374">
    <property type="term" value="P:positive regulation of ERK1 and ERK2 cascade"/>
    <property type="evidence" value="ECO:0000266"/>
    <property type="project" value="RGD"/>
</dbReference>
<dbReference type="GO" id="GO:0045921">
    <property type="term" value="P:positive regulation of exocytosis"/>
    <property type="evidence" value="ECO:0000266"/>
    <property type="project" value="RGD"/>
</dbReference>
<dbReference type="GO" id="GO:0034116">
    <property type="term" value="P:positive regulation of heterotypic cell-cell adhesion"/>
    <property type="evidence" value="ECO:0000266"/>
    <property type="project" value="RGD"/>
</dbReference>
<dbReference type="GO" id="GO:0090277">
    <property type="term" value="P:positive regulation of peptide hormone secretion"/>
    <property type="evidence" value="ECO:0000266"/>
    <property type="project" value="RGD"/>
</dbReference>
<dbReference type="GO" id="GO:0050714">
    <property type="term" value="P:positive regulation of protein secretion"/>
    <property type="evidence" value="ECO:0000266"/>
    <property type="project" value="RGD"/>
</dbReference>
<dbReference type="GO" id="GO:0014911">
    <property type="term" value="P:positive regulation of smooth muscle cell migration"/>
    <property type="evidence" value="ECO:0000314"/>
    <property type="project" value="RGD"/>
</dbReference>
<dbReference type="GO" id="GO:0045907">
    <property type="term" value="P:positive regulation of vasoconstriction"/>
    <property type="evidence" value="ECO:0000266"/>
    <property type="project" value="RGD"/>
</dbReference>
<dbReference type="GO" id="GO:0051258">
    <property type="term" value="P:protein polymerization"/>
    <property type="evidence" value="ECO:0000266"/>
    <property type="project" value="RGD"/>
</dbReference>
<dbReference type="GO" id="GO:0065003">
    <property type="term" value="P:protein-containing complex assembly"/>
    <property type="evidence" value="ECO:0000266"/>
    <property type="project" value="RGD"/>
</dbReference>
<dbReference type="GO" id="GO:0051592">
    <property type="term" value="P:response to calcium ion"/>
    <property type="evidence" value="ECO:0000266"/>
    <property type="project" value="RGD"/>
</dbReference>
<dbReference type="GO" id="GO:0046898">
    <property type="term" value="P:response to cycloheximide"/>
    <property type="evidence" value="ECO:0000270"/>
    <property type="project" value="RGD"/>
</dbReference>
<dbReference type="GO" id="GO:0032355">
    <property type="term" value="P:response to estradiol"/>
    <property type="evidence" value="ECO:0000270"/>
    <property type="project" value="RGD"/>
</dbReference>
<dbReference type="GO" id="GO:0033595">
    <property type="term" value="P:response to genistein"/>
    <property type="evidence" value="ECO:0000270"/>
    <property type="project" value="RGD"/>
</dbReference>
<dbReference type="GO" id="GO:0060416">
    <property type="term" value="P:response to growth hormone"/>
    <property type="evidence" value="ECO:0000270"/>
    <property type="project" value="RGD"/>
</dbReference>
<dbReference type="GO" id="GO:0032868">
    <property type="term" value="P:response to insulin"/>
    <property type="evidence" value="ECO:0000270"/>
    <property type="project" value="RGD"/>
</dbReference>
<dbReference type="GO" id="GO:0097066">
    <property type="term" value="P:response to thyroid hormone"/>
    <property type="evidence" value="ECO:0000270"/>
    <property type="project" value="RGD"/>
</dbReference>
<dbReference type="GO" id="GO:0009636">
    <property type="term" value="P:response to toxic substance"/>
    <property type="evidence" value="ECO:0000270"/>
    <property type="project" value="RGD"/>
</dbReference>
<dbReference type="GO" id="GO:0010165">
    <property type="term" value="P:response to X-ray"/>
    <property type="evidence" value="ECO:0000270"/>
    <property type="project" value="RGD"/>
</dbReference>
<dbReference type="GO" id="GO:0044468">
    <property type="term" value="P:venom-mediated perturbation of blood coagulation"/>
    <property type="evidence" value="ECO:0000270"/>
    <property type="project" value="RGD"/>
</dbReference>
<dbReference type="CDD" id="cd00087">
    <property type="entry name" value="FReD"/>
    <property type="match status" value="1"/>
</dbReference>
<dbReference type="FunFam" id="1.20.5.50:FF:000006">
    <property type="entry name" value="Fibrinogen alpha chain"/>
    <property type="match status" value="1"/>
</dbReference>
<dbReference type="FunFam" id="3.90.215.10:FF:000009">
    <property type="entry name" value="Fibrinogen alpha chain"/>
    <property type="match status" value="1"/>
</dbReference>
<dbReference type="Gene3D" id="1.20.5.50">
    <property type="match status" value="1"/>
</dbReference>
<dbReference type="Gene3D" id="3.90.215.10">
    <property type="entry name" value="Gamma Fibrinogen, chain A, domain 1"/>
    <property type="match status" value="1"/>
</dbReference>
<dbReference type="Gene3D" id="4.10.530.10">
    <property type="entry name" value="Gamma-fibrinogen Carboxyl Terminal Fragment, domain 2"/>
    <property type="match status" value="1"/>
</dbReference>
<dbReference type="InterPro" id="IPR037579">
    <property type="entry name" value="FIB_ANG-like"/>
</dbReference>
<dbReference type="InterPro" id="IPR036056">
    <property type="entry name" value="Fibrinogen-like_C"/>
</dbReference>
<dbReference type="InterPro" id="IPR014716">
    <property type="entry name" value="Fibrinogen_a/b/g_C_1"/>
</dbReference>
<dbReference type="InterPro" id="IPR002181">
    <property type="entry name" value="Fibrinogen_a/b/g_C_dom"/>
</dbReference>
<dbReference type="InterPro" id="IPR012290">
    <property type="entry name" value="Fibrinogen_a/b/g_coil_dom"/>
</dbReference>
<dbReference type="InterPro" id="IPR021996">
    <property type="entry name" value="Fibrinogen_aC"/>
</dbReference>
<dbReference type="InterPro" id="IPR020837">
    <property type="entry name" value="Fibrinogen_CS"/>
</dbReference>
<dbReference type="NCBIfam" id="NF040941">
    <property type="entry name" value="GGGWT_bact"/>
    <property type="match status" value="1"/>
</dbReference>
<dbReference type="PANTHER" id="PTHR47221">
    <property type="entry name" value="FIBRINOGEN ALPHA CHAIN"/>
    <property type="match status" value="1"/>
</dbReference>
<dbReference type="PANTHER" id="PTHR47221:SF3">
    <property type="entry name" value="FIBRINOGEN ALPHA CHAIN"/>
    <property type="match status" value="1"/>
</dbReference>
<dbReference type="Pfam" id="PF08702">
    <property type="entry name" value="Fib_alpha"/>
    <property type="match status" value="1"/>
</dbReference>
<dbReference type="Pfam" id="PF12160">
    <property type="entry name" value="Fibrinogen_aC"/>
    <property type="match status" value="1"/>
</dbReference>
<dbReference type="Pfam" id="PF00147">
    <property type="entry name" value="Fibrinogen_C"/>
    <property type="match status" value="1"/>
</dbReference>
<dbReference type="SMART" id="SM00186">
    <property type="entry name" value="FBG"/>
    <property type="match status" value="1"/>
</dbReference>
<dbReference type="SMART" id="SM01212">
    <property type="entry name" value="Fib_alpha"/>
    <property type="match status" value="1"/>
</dbReference>
<dbReference type="SUPFAM" id="SSF56496">
    <property type="entry name" value="Fibrinogen C-terminal domain-like"/>
    <property type="match status" value="1"/>
</dbReference>
<dbReference type="SUPFAM" id="SSF58010">
    <property type="entry name" value="Fibrinogen coiled-coil and central regions"/>
    <property type="match status" value="1"/>
</dbReference>
<dbReference type="PROSITE" id="PS00514">
    <property type="entry name" value="FIBRINOGEN_C_1"/>
    <property type="match status" value="1"/>
</dbReference>
<dbReference type="PROSITE" id="PS51406">
    <property type="entry name" value="FIBRINOGEN_C_2"/>
    <property type="match status" value="1"/>
</dbReference>
<protein>
    <recommendedName>
        <fullName>Fibrinogen alpha chain</fullName>
    </recommendedName>
    <component>
        <recommendedName>
            <fullName>Fibrinopeptide A</fullName>
        </recommendedName>
    </component>
    <component>
        <recommendedName>
            <fullName>Fibrinogen alpha chain</fullName>
        </recommendedName>
    </component>
</protein>
<gene>
    <name type="primary">Fga</name>
</gene>
<organism>
    <name type="scientific">Rattus norvegicus</name>
    <name type="common">Rat</name>
    <dbReference type="NCBI Taxonomy" id="10116"/>
    <lineage>
        <taxon>Eukaryota</taxon>
        <taxon>Metazoa</taxon>
        <taxon>Chordata</taxon>
        <taxon>Craniata</taxon>
        <taxon>Vertebrata</taxon>
        <taxon>Euteleostomi</taxon>
        <taxon>Mammalia</taxon>
        <taxon>Eutheria</taxon>
        <taxon>Euarchontoglires</taxon>
        <taxon>Glires</taxon>
        <taxon>Rodentia</taxon>
        <taxon>Myomorpha</taxon>
        <taxon>Muroidea</taxon>
        <taxon>Muridae</taxon>
        <taxon>Murinae</taxon>
        <taxon>Rattus</taxon>
    </lineage>
</organism>
<proteinExistence type="evidence at protein level"/>
<reference key="1">
    <citation type="journal article" date="1995" name="Genomics">
        <title>Fibrinogen alpha genes: conservation of bipartite transcripts and carboxy-terminal-extended alpha subunits in vertebrates.</title>
        <authorList>
            <person name="Fu Y."/>
            <person name="Cao Y."/>
            <person name="Hertzberg K.M."/>
            <person name="Grieninger G."/>
        </authorList>
    </citation>
    <scope>NUCLEOTIDE SEQUENCE [GENOMIC DNA]</scope>
</reference>
<reference key="2">
    <citation type="journal article" date="1985" name="J. Mol. Biol.">
        <title>Evolution and structure of the fibrinogen genes. Random insertion of introns or selective loss?</title>
        <authorList>
            <person name="Crabtree G.R."/>
            <person name="Comeau C.M."/>
            <person name="Fowlkes D.M."/>
            <person name="Fornace A.J. Jr."/>
            <person name="Malley J.D."/>
            <person name="Kant J.A."/>
        </authorList>
    </citation>
    <scope>NUCLEOTIDE SEQUENCE [GENOMIC DNA] (ISOFORM 2)</scope>
</reference>
<reference key="3">
    <citation type="journal article" date="1965" name="Acta Chem. Scand.">
        <title>Studies on fibrinopeptides from mammals.</title>
        <authorList>
            <person name="Blombaeck B."/>
            <person name="Blombaeck M."/>
            <person name="Grondahl N.J."/>
        </authorList>
    </citation>
    <scope>PROTEIN SEQUENCE OF 20-36</scope>
</reference>
<reference key="4">
    <citation type="journal article" date="1987" name="Exp. Cell Res.">
        <title>Molecular cloning of mRNA sequences transiently induced during rat liver regeneration.</title>
        <authorList>
            <person name="Sobczak J."/>
            <person name="Lotti A.-M."/>
            <person name="Taroux P."/>
            <person name="Duguet M."/>
        </authorList>
    </citation>
    <scope>NUCLEOTIDE SEQUENCE [MRNA] OF 458-550 (ISOFORM 2)</scope>
    <source>
        <strain>Wistar</strain>
        <tissue>Liver</tissue>
    </source>
</reference>
<reference key="5">
    <citation type="journal article" date="2012" name="Nat. Commun.">
        <title>Quantitative maps of protein phosphorylation sites across 14 different rat organs and tissues.</title>
        <authorList>
            <person name="Lundby A."/>
            <person name="Secher A."/>
            <person name="Lage K."/>
            <person name="Nordsborg N.B."/>
            <person name="Dmytriyev A."/>
            <person name="Lundby C."/>
            <person name="Olsen J.V."/>
        </authorList>
    </citation>
    <scope>PHOSPHORYLATION [LARGE SCALE ANALYSIS] AT SER-279; SER-326; SER-470 AND SER-526</scope>
    <scope>IDENTIFICATION BY MASS SPECTROMETRY [LARGE SCALE ANALYSIS]</scope>
</reference>
<feature type="signal peptide" evidence="6">
    <location>
        <begin position="1"/>
        <end position="19"/>
    </location>
</feature>
<feature type="peptide" id="PRO_0000009039" description="Fibrinopeptide A">
    <location>
        <begin position="20"/>
        <end position="36"/>
    </location>
</feature>
<feature type="chain" id="PRO_0000009038" description="Fibrinogen alpha chain">
    <location>
        <begin position="37"/>
        <end position="782"/>
    </location>
</feature>
<feature type="domain" description="Fibrinogen C-terminal" evidence="4">
    <location>
        <begin position="539"/>
        <end position="780"/>
    </location>
</feature>
<feature type="region of interest" description="Disordered" evidence="5">
    <location>
        <begin position="264"/>
        <end position="374"/>
    </location>
</feature>
<feature type="region of interest" description="Disordered" evidence="5">
    <location>
        <begin position="522"/>
        <end position="542"/>
    </location>
</feature>
<feature type="coiled-coil region" evidence="2">
    <location>
        <begin position="68"/>
        <end position="547"/>
    </location>
</feature>
<feature type="compositionally biased region" description="Basic and acidic residues" evidence="5">
    <location>
        <begin position="264"/>
        <end position="283"/>
    </location>
</feature>
<feature type="compositionally biased region" description="Gly residues" evidence="5">
    <location>
        <begin position="311"/>
        <end position="323"/>
    </location>
</feature>
<feature type="compositionally biased region" description="Low complexity" evidence="5">
    <location>
        <begin position="324"/>
        <end position="344"/>
    </location>
</feature>
<feature type="compositionally biased region" description="Low complexity" evidence="5">
    <location>
        <begin position="354"/>
        <end position="364"/>
    </location>
</feature>
<feature type="compositionally biased region" description="Basic and acidic residues" evidence="5">
    <location>
        <begin position="522"/>
        <end position="536"/>
    </location>
</feature>
<feature type="binding site" evidence="2">
    <location>
        <position position="707"/>
    </location>
    <ligand>
        <name>Ca(2+)</name>
        <dbReference type="ChEBI" id="CHEBI:29108"/>
    </ligand>
</feature>
<feature type="binding site" evidence="2">
    <location>
        <position position="709"/>
    </location>
    <ligand>
        <name>Ca(2+)</name>
        <dbReference type="ChEBI" id="CHEBI:29108"/>
    </ligand>
</feature>
<feature type="binding site" evidence="2">
    <location>
        <position position="711"/>
    </location>
    <ligand>
        <name>Ca(2+)</name>
        <dbReference type="ChEBI" id="CHEBI:29108"/>
    </ligand>
</feature>
<feature type="binding site" evidence="2">
    <location>
        <position position="713"/>
    </location>
    <ligand>
        <name>Ca(2+)</name>
        <dbReference type="ChEBI" id="CHEBI:29108"/>
    </ligand>
</feature>
<feature type="site" description="Cleavage; by thrombin; to release fibrinopeptide A">
    <location>
        <begin position="36"/>
        <end position="37"/>
    </location>
</feature>
<feature type="site" description="Cleavage; by plasmin; to break down fibrin clots" evidence="2">
    <location>
        <begin position="101"/>
        <end position="102"/>
    </location>
</feature>
<feature type="site" description="Cleavage; by hementin; to prevent blood coagulation" evidence="2">
    <location>
        <begin position="122"/>
        <end position="123"/>
    </location>
</feature>
<feature type="site" description="Cleavage; by plasmin; to break down fibrin clots" evidence="2">
    <location>
        <begin position="124"/>
        <end position="125"/>
    </location>
</feature>
<feature type="modified residue" description="Phosphoserine" evidence="9">
    <location>
        <position position="279"/>
    </location>
</feature>
<feature type="modified residue" description="Phosphoserine" evidence="9">
    <location>
        <position position="326"/>
    </location>
</feature>
<feature type="modified residue" description="Phosphoserine" evidence="9">
    <location>
        <position position="470"/>
    </location>
</feature>
<feature type="modified residue" description="4-hydroxyproline; by P4HA1" evidence="2">
    <location>
        <position position="499"/>
    </location>
</feature>
<feature type="modified residue" description="Phosphoserine" evidence="9">
    <location>
        <position position="526"/>
    </location>
</feature>
<feature type="glycosylation site" description="N-linked (GlcNAc...) asparagine" evidence="3">
    <location>
        <position position="602"/>
    </location>
</feature>
<feature type="disulfide bond" description="Interchain" evidence="4">
    <location>
        <position position="48"/>
    </location>
</feature>
<feature type="disulfide bond" description="Interchain (with beta chain)" evidence="4">
    <location>
        <position position="56"/>
    </location>
</feature>
<feature type="disulfide bond" description="Interchain (with C-49 in gamma chain)" evidence="4">
    <location>
        <position position="65"/>
    </location>
</feature>
<feature type="disulfide bond" description="Interchain (with beta chain)" evidence="4">
    <location>
        <position position="69"/>
    </location>
</feature>
<feature type="disulfide bond" description="Interchain (with C-165 in gamma chain)" evidence="4">
    <location>
        <position position="181"/>
    </location>
</feature>
<feature type="disulfide bond" description="Interchain (with beta chain)" evidence="4">
    <location>
        <position position="185"/>
    </location>
</feature>
<feature type="disulfide bond" evidence="4">
    <location>
        <begin position="404"/>
        <end position="434"/>
    </location>
</feature>
<feature type="disulfide bond" evidence="2">
    <location>
        <begin position="715"/>
        <end position="728"/>
    </location>
</feature>
<feature type="splice variant" id="VSP_001533" description="In isoform 2." evidence="7">
    <original>DCDD</original>
    <variation>GIHA</variation>
    <location>
        <begin position="547"/>
        <end position="550"/>
    </location>
</feature>
<feature type="splice variant" id="VSP_001534" description="In isoform 2." evidence="7">
    <location>
        <begin position="551"/>
        <end position="782"/>
    </location>
</feature>
<feature type="sequence conflict" description="In Ref. 3; AA sequence." evidence="8" ref="3">
    <original>EAGGD</original>
    <variation>DEGAG</variation>
    <location>
        <begin position="30"/>
        <end position="34"/>
    </location>
</feature>
<feature type="sequence conflict" description="In Ref. 2; no nucleotide entry." evidence="8" ref="2">
    <original>Q</original>
    <variation>E</variation>
    <location>
        <position position="140"/>
    </location>
</feature>
<feature type="sequence conflict" description="In Ref. 2; no nucleotide entry." evidence="8" ref="2">
    <original>D</original>
    <variation>E</variation>
    <location>
        <position position="212"/>
    </location>
</feature>
<feature type="sequence conflict" description="In Ref. 2." evidence="8" ref="2">
    <original>ASRGDLP</original>
    <variation>LREEIYQ</variation>
    <location>
        <begin position="270"/>
        <end position="276"/>
    </location>
</feature>
<feature type="sequence conflict" description="In Ref. 4; AAA41158." evidence="8" ref="4">
    <original>S</original>
    <variation>K</variation>
    <location>
        <position position="473"/>
    </location>
</feature>
<sequence>MLSLRVACLILSLASTVWTADTGTTSEFIEAGGDIRGPRIVERQPSQCKETDWPFCSDEDWNHKCPSGCRMKGLIDEANQDFTNRINKLKNSLFDFQKNNKDSNSLTRNIMEYLRGDFANANNFDNTFGQVSEDLRRRIQILKRKVIEKAQQIQVLQKDVRDQLIDMKRLEVDIDIKIRSCKGSCSRSVSREINLKDYEGQQKQLEQVIAKDLLPAKDRQYLPAIKMSPVPDLVPGSFKSQLQEGPPEWKALTEMRQMRMELERPGKDGASRGDLPGDSRGDSATRGPGSKIENPMTPGHGGSGYWRPGSSGSGSDGNWGSGTTGSDDTGTWGAGSSRPSSGSGNLKPSNPDWGEFSEFGGSSSPATRKEYHTGKLVTSKGDKELLIGNEKVTSTGTSTTRRSCSKTITKTVLGNDGHREVVKEVVTSDDGSDCGDGMDLGLTHSFSGRLDELSRMHPELGSFYDSRFGSLTSNFKEFGSKTSDSDIFTDIENPSSHVPEFSSSSKTSTVRKQVTKSYKMADEAASEAHQEGDTRTTKRGRARTMRDCDDVLQTHPSGAQNGIFSIKLPGSSKIFSVYCDQETSLGGWLLIQQRMDGSLNFNRTWQDYKRGFGSLNDKGEGEFWLGNDYLHLLTLRGSVLRVELEDWAGKEAYAEYHFRVGSEAEGYALQVSSYQGTAGDALMEGSVEEGTEYTSHSNMQFSTFDRDADQWEENCAEVYGGGWWYNSCQAANLNGIYYPGGTYDPRNNSPYEIENGVLWVPFRGADYSLWAVRMKIRPLVGQ</sequence>
<name>FIBA_RAT</name>
<keyword id="KW-1064">Adaptive immunity</keyword>
<keyword id="KW-0025">Alternative splicing</keyword>
<keyword id="KW-0094">Blood coagulation</keyword>
<keyword id="KW-0106">Calcium</keyword>
<keyword id="KW-0175">Coiled coil</keyword>
<keyword id="KW-0903">Direct protein sequencing</keyword>
<keyword id="KW-1015">Disulfide bond</keyword>
<keyword id="KW-0325">Glycoprotein</keyword>
<keyword id="KW-0356">Hemostasis</keyword>
<keyword id="KW-0379">Hydroxylation</keyword>
<keyword id="KW-0391">Immunity</keyword>
<keyword id="KW-0399">Innate immunity</keyword>
<keyword id="KW-0479">Metal-binding</keyword>
<keyword id="KW-0597">Phosphoprotein</keyword>
<keyword id="KW-1185">Reference proteome</keyword>
<keyword id="KW-0964">Secreted</keyword>
<keyword id="KW-0732">Signal</keyword>
<comment type="function">
    <text evidence="1">Cleaved by the protease thrombin to yield monomers which, together with fibrinogen beta (FGB) and fibrinogen gamma (FGG), polymerize to form an insoluble fibrin matrix. Fibrin has a major function in hemostasis as one of the primary components of blood clots. In addition, functions during the early stages of wound repair to stabilize the lesion and guide cell migration during re-epithelialization. Was originally thought to be essential for platelet aggregation, based on in vitro studies using anticoagulated blood. However, subsequent studies have shown that it is not absolutely required for thrombus formation in vivo. Enhances expression of SELP in activated platelets via an ITGB3-dependent pathway. Maternal fibrinogen is essential for successful pregnancy. Fibrin deposition is also associated with infection, where it protects against IFNG-mediated hemorrhage. May also facilitate the immune response via both innate and T-cell mediated pathways.</text>
</comment>
<comment type="subunit">
    <text evidence="2">Heterohexamer; disulfide linked. Contains 2 sets of 3 non-identical chains (alpha, beta and gamma). The 2 heterotrimers are in head to head conformation with the N-termini in a small central domain (By similarity).</text>
</comment>
<comment type="subcellular location">
    <subcellularLocation>
        <location evidence="2">Secreted</location>
    </subcellularLocation>
</comment>
<comment type="alternative products">
    <event type="alternative splicing"/>
    <isoform>
        <id>P06399-1</id>
        <name>1</name>
        <name>Alpha-E</name>
        <sequence type="displayed"/>
    </isoform>
    <isoform>
        <id>P06399-2</id>
        <name>2</name>
        <name>Alpha</name>
        <sequence type="described" ref="VSP_001533 VSP_001534"/>
    </isoform>
</comment>
<comment type="domain">
    <text evidence="2">A long coiled coil structure formed by 3 polypeptide chains connects the central nodule to the C-terminal domains (distal nodules). The long C-terminal ends of the alpha chains fold back, contributing a fourth strand to the coiled coil structure.</text>
</comment>
<comment type="PTM">
    <text>Conversion of fibrinogen to fibrin is triggered by thrombin, which cleaves fibrinopeptides A and B from alpha and beta chains, and thus exposes the N-terminal polymerization sites responsible for the formation of the soft clot. The soft clot is converted into the hard clot by factor XIIIA which catalyzes the epsilon-(gamma-glutamyl)lysine cross-linking between gamma chains (stronger) and between alpha chains (weaker) of different monomers.</text>
</comment>
<comment type="PTM">
    <text>Forms F13A-mediated cross-links between a glutamine and the epsilon-amino group of a lysine residue, forming fibronectin-fibrinogen heteropolymers.</text>
</comment>
<comment type="PTM">
    <text evidence="2">Phosphorylated by FAM20C in the extracellular medium.</text>
</comment>
<comment type="miscellaneous">
    <molecule>Isoform 2</molecule>
    <text evidence="8">Major isoform.</text>
</comment>